<name>Y2479_PHOLL</name>
<evidence type="ECO:0000255" key="1">
    <source>
        <dbReference type="HAMAP-Rule" id="MF_01067"/>
    </source>
</evidence>
<dbReference type="EMBL" id="BX571867">
    <property type="protein sequence ID" value="CAE14853.1"/>
    <property type="molecule type" value="Genomic_DNA"/>
</dbReference>
<dbReference type="RefSeq" id="WP_011146702.1">
    <property type="nucleotide sequence ID" value="NC_005126.1"/>
</dbReference>
<dbReference type="STRING" id="243265.plu2479"/>
<dbReference type="GeneID" id="48848744"/>
<dbReference type="KEGG" id="plu:plu2479"/>
<dbReference type="eggNOG" id="ENOG502Z96Y">
    <property type="taxonomic scope" value="Bacteria"/>
</dbReference>
<dbReference type="HOGENOM" id="CLU_073287_0_0_6"/>
<dbReference type="OrthoDB" id="6454524at2"/>
<dbReference type="Proteomes" id="UP000002514">
    <property type="component" value="Chromosome"/>
</dbReference>
<dbReference type="GO" id="GO:0005886">
    <property type="term" value="C:plasma membrane"/>
    <property type="evidence" value="ECO:0007669"/>
    <property type="project" value="UniProtKB-SubCell"/>
</dbReference>
<dbReference type="HAMAP" id="MF_01067">
    <property type="entry name" value="UPF0259"/>
    <property type="match status" value="1"/>
</dbReference>
<dbReference type="InterPro" id="IPR009627">
    <property type="entry name" value="UPF0259"/>
</dbReference>
<dbReference type="NCBIfam" id="NF002774">
    <property type="entry name" value="PRK02868.1"/>
    <property type="match status" value="1"/>
</dbReference>
<dbReference type="Pfam" id="PF06790">
    <property type="entry name" value="UPF0259"/>
    <property type="match status" value="1"/>
</dbReference>
<comment type="subcellular location">
    <subcellularLocation>
        <location evidence="1">Cell inner membrane</location>
        <topology evidence="1">Multi-pass membrane protein</topology>
    </subcellularLocation>
</comment>
<comment type="similarity">
    <text evidence="1">Belongs to the UPF0259 family.</text>
</comment>
<protein>
    <recommendedName>
        <fullName evidence="1">UPF0259 membrane protein plu2479</fullName>
    </recommendedName>
</protein>
<accession>Q7N475</accession>
<proteinExistence type="inferred from homology"/>
<organism>
    <name type="scientific">Photorhabdus laumondii subsp. laumondii (strain DSM 15139 / CIP 105565 / TT01)</name>
    <name type="common">Photorhabdus luminescens subsp. laumondii</name>
    <dbReference type="NCBI Taxonomy" id="243265"/>
    <lineage>
        <taxon>Bacteria</taxon>
        <taxon>Pseudomonadati</taxon>
        <taxon>Pseudomonadota</taxon>
        <taxon>Gammaproteobacteria</taxon>
        <taxon>Enterobacterales</taxon>
        <taxon>Morganellaceae</taxon>
        <taxon>Photorhabdus</taxon>
    </lineage>
</organism>
<reference key="1">
    <citation type="journal article" date="2003" name="Nat. Biotechnol.">
        <title>The genome sequence of the entomopathogenic bacterium Photorhabdus luminescens.</title>
        <authorList>
            <person name="Duchaud E."/>
            <person name="Rusniok C."/>
            <person name="Frangeul L."/>
            <person name="Buchrieser C."/>
            <person name="Givaudan A."/>
            <person name="Taourit S."/>
            <person name="Bocs S."/>
            <person name="Boursaux-Eude C."/>
            <person name="Chandler M."/>
            <person name="Charles J.-F."/>
            <person name="Dassa E."/>
            <person name="Derose R."/>
            <person name="Derzelle S."/>
            <person name="Freyssinet G."/>
            <person name="Gaudriault S."/>
            <person name="Medigue C."/>
            <person name="Lanois A."/>
            <person name="Powell K."/>
            <person name="Siguier P."/>
            <person name="Vincent R."/>
            <person name="Wingate V."/>
            <person name="Zouine M."/>
            <person name="Glaser P."/>
            <person name="Boemare N."/>
            <person name="Danchin A."/>
            <person name="Kunst F."/>
        </authorList>
    </citation>
    <scope>NUCLEOTIDE SEQUENCE [LARGE SCALE GENOMIC DNA]</scope>
    <source>
        <strain>DSM 15139 / CIP 105565 / TT01</strain>
    </source>
</reference>
<feature type="chain" id="PRO_0000206517" description="UPF0259 membrane protein plu2479">
    <location>
        <begin position="1"/>
        <end position="256"/>
    </location>
</feature>
<feature type="transmembrane region" description="Helical" evidence="1">
    <location>
        <begin position="23"/>
        <end position="43"/>
    </location>
</feature>
<feature type="transmembrane region" description="Helical" evidence="1">
    <location>
        <begin position="89"/>
        <end position="109"/>
    </location>
</feature>
<feature type="transmembrane region" description="Helical" evidence="1">
    <location>
        <begin position="132"/>
        <end position="152"/>
    </location>
</feature>
<feature type="transmembrane region" description="Helical" evidence="1">
    <location>
        <begin position="192"/>
        <end position="212"/>
    </location>
</feature>
<feature type="transmembrane region" description="Helical" evidence="1">
    <location>
        <begin position="221"/>
        <end position="241"/>
    </location>
</feature>
<keyword id="KW-0997">Cell inner membrane</keyword>
<keyword id="KW-1003">Cell membrane</keyword>
<keyword id="KW-0472">Membrane</keyword>
<keyword id="KW-1185">Reference proteome</keyword>
<keyword id="KW-0812">Transmembrane</keyword>
<keyword id="KW-1133">Transmembrane helix</keyword>
<sequence length="256" mass="27902">MPITANTLYRDSFNFFKNQLLSTLTLAVLAALVTTLLGHLFIPDSEQMKLLTEAEFTFATSGKAGIQELVSQMTPEQQSMIMRAGIGTIFSSMIGSVLLVGGVLTLVAAVSAGNRISSLQAIGLSASQLPKLFLLLLICTLLIQFGLMLMLVPGIILSIALALSPVIMTAERRGVFASMKISWKLAFANIRLLVPAILLWLTARLLLVFIIDRLTFIHSEMAGIILGVFNNLISAILLIYLYRLYMLIASPQQKSI</sequence>
<gene>
    <name type="ordered locus">plu2479</name>
</gene>